<feature type="chain" id="PRO_0000054701" description="Gluconate 5-dehydrogenase">
    <location>
        <begin position="1"/>
        <end position="256"/>
    </location>
</feature>
<feature type="active site" description="Proton acceptor" evidence="2">
    <location>
        <position position="160"/>
    </location>
</feature>
<feature type="binding site" evidence="1">
    <location>
        <begin position="15"/>
        <end position="39"/>
    </location>
    <ligand>
        <name>NADP(+)</name>
        <dbReference type="ChEBI" id="CHEBI:58349"/>
    </ligand>
</feature>
<feature type="binding site" evidence="1">
    <location>
        <position position="147"/>
    </location>
    <ligand>
        <name>substrate</name>
    </ligand>
</feature>
<keyword id="KW-0119">Carbohydrate metabolism</keyword>
<keyword id="KW-0963">Cytoplasm</keyword>
<keyword id="KW-0903">Direct protein sequencing</keyword>
<keyword id="KW-0521">NADP</keyword>
<keyword id="KW-0560">Oxidoreductase</keyword>
<keyword id="KW-1185">Reference proteome</keyword>
<accession>P50199</accession>
<accession>Q5FNX3</accession>
<proteinExistence type="evidence at protein level"/>
<gene>
    <name evidence="4" type="primary">gno</name>
    <name type="ordered locus">GOX2187</name>
</gene>
<dbReference type="EC" id="1.1.1.-" evidence="3"/>
<dbReference type="EMBL" id="X80019">
    <property type="protein sequence ID" value="CAA56322.1"/>
    <property type="molecule type" value="Genomic_DNA"/>
</dbReference>
<dbReference type="EMBL" id="CP000009">
    <property type="protein sequence ID" value="AAW61923.1"/>
    <property type="molecule type" value="Genomic_DNA"/>
</dbReference>
<dbReference type="PIR" id="A57149">
    <property type="entry name" value="A57149"/>
</dbReference>
<dbReference type="RefSeq" id="WP_011253698.1">
    <property type="nucleotide sequence ID" value="NC_006677.1"/>
</dbReference>
<dbReference type="SMR" id="P50199"/>
<dbReference type="STRING" id="290633.GOX2187"/>
<dbReference type="KEGG" id="gox:GOX2187"/>
<dbReference type="eggNOG" id="COG1028">
    <property type="taxonomic scope" value="Bacteria"/>
</dbReference>
<dbReference type="HOGENOM" id="CLU_010194_1_1_5"/>
<dbReference type="BioCyc" id="MetaCyc:MONOMER-17960"/>
<dbReference type="Proteomes" id="UP000006375">
    <property type="component" value="Chromosome"/>
</dbReference>
<dbReference type="GO" id="GO:0005737">
    <property type="term" value="C:cytoplasm"/>
    <property type="evidence" value="ECO:0007669"/>
    <property type="project" value="UniProtKB-SubCell"/>
</dbReference>
<dbReference type="GO" id="GO:0008874">
    <property type="term" value="F:gluconate 5-dehydrogenase activity"/>
    <property type="evidence" value="ECO:0000314"/>
    <property type="project" value="UniProtKB"/>
</dbReference>
<dbReference type="GO" id="GO:0050661">
    <property type="term" value="F:NADP binding"/>
    <property type="evidence" value="ECO:0000314"/>
    <property type="project" value="UniProtKB"/>
</dbReference>
<dbReference type="GO" id="GO:0042803">
    <property type="term" value="F:protein homodimerization activity"/>
    <property type="evidence" value="ECO:0000314"/>
    <property type="project" value="UniProtKB"/>
</dbReference>
<dbReference type="CDD" id="cd05347">
    <property type="entry name" value="Ga5DH-like_SDR_c"/>
    <property type="match status" value="1"/>
</dbReference>
<dbReference type="FunFam" id="3.40.50.720:FF:000084">
    <property type="entry name" value="Short-chain dehydrogenase reductase"/>
    <property type="match status" value="1"/>
</dbReference>
<dbReference type="Gene3D" id="3.40.50.720">
    <property type="entry name" value="NAD(P)-binding Rossmann-like Domain"/>
    <property type="match status" value="1"/>
</dbReference>
<dbReference type="InterPro" id="IPR036291">
    <property type="entry name" value="NAD(P)-bd_dom_sf"/>
</dbReference>
<dbReference type="InterPro" id="IPR020904">
    <property type="entry name" value="Sc_DH/Rdtase_CS"/>
</dbReference>
<dbReference type="InterPro" id="IPR002347">
    <property type="entry name" value="SDR_fam"/>
</dbReference>
<dbReference type="NCBIfam" id="NF005711">
    <property type="entry name" value="PRK07523.1"/>
    <property type="match status" value="1"/>
</dbReference>
<dbReference type="PANTHER" id="PTHR42760:SF5">
    <property type="entry name" value="2-DEHYDRO-3-DEOXY-D-GLUCONATE 5-DEHYDROGENASE"/>
    <property type="match status" value="1"/>
</dbReference>
<dbReference type="PANTHER" id="PTHR42760">
    <property type="entry name" value="SHORT-CHAIN DEHYDROGENASES/REDUCTASES FAMILY MEMBER"/>
    <property type="match status" value="1"/>
</dbReference>
<dbReference type="Pfam" id="PF00106">
    <property type="entry name" value="adh_short"/>
    <property type="match status" value="1"/>
</dbReference>
<dbReference type="PRINTS" id="PR00081">
    <property type="entry name" value="GDHRDH"/>
</dbReference>
<dbReference type="PRINTS" id="PR00080">
    <property type="entry name" value="SDRFAMILY"/>
</dbReference>
<dbReference type="SMART" id="SM00822">
    <property type="entry name" value="PKS_KR"/>
    <property type="match status" value="1"/>
</dbReference>
<dbReference type="SUPFAM" id="SSF51735">
    <property type="entry name" value="NAD(P)-binding Rossmann-fold domains"/>
    <property type="match status" value="1"/>
</dbReference>
<dbReference type="PROSITE" id="PS00061">
    <property type="entry name" value="ADH_SHORT"/>
    <property type="match status" value="1"/>
</dbReference>
<protein>
    <recommendedName>
        <fullName evidence="6">Gluconate 5-dehydrogenase</fullName>
        <ecNumber evidence="3">1.1.1.-</ecNumber>
    </recommendedName>
    <alternativeName>
        <fullName evidence="6">D-gluconate 5-dehydrogenase (NADP)</fullName>
    </alternativeName>
    <alternativeName>
        <fullName evidence="4">Gluconate:NADP 5-oxidoreductase</fullName>
        <shortName evidence="4">GNO</shortName>
    </alternativeName>
</protein>
<sequence>MSHPDLFSLSGARALVTGASRGIGLTLAKGLARYGAEVVLNGRNAESLDSAQSGFEAEGLKASTAVFDVTDQDAVIDGVAAIERDMGPIDILINNAGIQRRAPLEEFSRKDWDDLMSTNVNAVFFVGQAVARHMIPRGRGKIVNICSVQSELARPGIAPYTATKGAVKNLTKGMATDWGRHGLQINGLAPGYFATEMTERLVADEEFTDWLCKRTPAGRWGQVEELVGAAVFLSSRASSFVNGQVLMVDGGITVSL</sequence>
<organism>
    <name type="scientific">Gluconobacter oxydans (strain 621H)</name>
    <name type="common">Gluconobacter suboxydans</name>
    <dbReference type="NCBI Taxonomy" id="290633"/>
    <lineage>
        <taxon>Bacteria</taxon>
        <taxon>Pseudomonadati</taxon>
        <taxon>Pseudomonadota</taxon>
        <taxon>Alphaproteobacteria</taxon>
        <taxon>Acetobacterales</taxon>
        <taxon>Acetobacteraceae</taxon>
        <taxon>Gluconobacter</taxon>
    </lineage>
</organism>
<evidence type="ECO:0000250" key="1"/>
<evidence type="ECO:0000255" key="2">
    <source>
        <dbReference type="PROSITE-ProRule" id="PRU10001"/>
    </source>
</evidence>
<evidence type="ECO:0000269" key="3">
    <source>
    </source>
</evidence>
<evidence type="ECO:0000303" key="4">
    <source>
    </source>
</evidence>
<evidence type="ECO:0000305" key="5"/>
<evidence type="ECO:0000305" key="6">
    <source>
    </source>
</evidence>
<name>GNO_GLUOX</name>
<comment type="function">
    <text evidence="3">Catalyzes the reversible NADP-dependent oxidation of gluconate to 5-ketogluconate. Is involved in the non-phosphorylative, ketogenic oxidation of glucose. Is almost inactive with NAD as cosubstrate. Displays high substrate specificity since D-Glucose, D-sorbitol, and D-mannitol are not oxidized by the enzyme, and 2-ketogluconate and L-sorbose are not reduced. Can accept D-fructose as a substrate, with a rate that is only 10% of the rate of 5-ketogluconate reduction.</text>
</comment>
<comment type="catalytic activity">
    <reaction evidence="3">
        <text>D-gluconate + NADP(+) = 5-dehydro-D-gluconate + NADPH + H(+)</text>
        <dbReference type="Rhea" id="RHEA:23936"/>
        <dbReference type="ChEBI" id="CHEBI:15378"/>
        <dbReference type="ChEBI" id="CHEBI:18391"/>
        <dbReference type="ChEBI" id="CHEBI:57783"/>
        <dbReference type="ChEBI" id="CHEBI:58143"/>
        <dbReference type="ChEBI" id="CHEBI:58349"/>
    </reaction>
</comment>
<comment type="biophysicochemical properties">
    <kinetics>
        <KM evidence="3">20.6 mM for gluconate</KM>
        <KM evidence="3">73 uM for NADP</KM>
    </kinetics>
    <phDependence>
        <text evidence="3">Optimum pH is 10.0 for gluconate oxidation. Optimum pH is 5.0 for 5-ketogluconate reduction.</text>
    </phDependence>
</comment>
<comment type="subunit">
    <text evidence="3">Homodimer.</text>
</comment>
<comment type="subcellular location">
    <subcellularLocation>
        <location evidence="3">Cytoplasm</location>
    </subcellularLocation>
</comment>
<comment type="similarity">
    <text evidence="5">Belongs to the short-chain dehydrogenases/reductases (SDR) family.</text>
</comment>
<reference key="1">
    <citation type="journal article" date="1995" name="J. Bacteriol.">
        <title>Biochemical characterization and sequence analysis of the gluconate:NADP 5-oxidoreductase gene from Gluconobacter oxydans.</title>
        <authorList>
            <person name="Klasen R."/>
            <person name="Bringer-Meyer S."/>
            <person name="Sahm H."/>
        </authorList>
    </citation>
    <scope>NUCLEOTIDE SEQUENCE [GENOMIC DNA]</scope>
    <scope>PROTEIN SEQUENCE OF 3-19</scope>
    <scope>FUNCTION</scope>
    <scope>CATALYTIC ACTIVITY</scope>
    <scope>SUBSTRATE SPECIFICITY</scope>
    <scope>BIOPHYSICOCHEMICAL PROPERTIES</scope>
    <scope>SUBUNIT</scope>
    <scope>SUBCELLULAR LOCATION</scope>
    <source>
        <strain>ATCC 19357 / DSM 3503 / JCM 7642 / NBRC 14819 / LMG 1408 / NCIMB 9013</strain>
    </source>
</reference>
<reference key="2">
    <citation type="journal article" date="2005" name="Nat. Biotechnol.">
        <title>Complete genome sequence of the acetic acid bacterium Gluconobacter oxydans.</title>
        <authorList>
            <person name="Prust C."/>
            <person name="Hoffmeister M."/>
            <person name="Liesegang H."/>
            <person name="Wiezer A."/>
            <person name="Fricke W.F."/>
            <person name="Ehrenreich A."/>
            <person name="Gottschalk G."/>
            <person name="Deppenmeier U."/>
        </authorList>
    </citation>
    <scope>NUCLEOTIDE SEQUENCE [LARGE SCALE GENOMIC DNA]</scope>
    <source>
        <strain>621H</strain>
    </source>
</reference>